<accession>B4SU23</accession>
<proteinExistence type="inferred from homology"/>
<reference key="1">
    <citation type="journal article" date="2011" name="J. Bacteriol.">
        <title>Comparative genomics of 28 Salmonella enterica isolates: evidence for CRISPR-mediated adaptive sublineage evolution.</title>
        <authorList>
            <person name="Fricke W.F."/>
            <person name="Mammel M.K."/>
            <person name="McDermott P.F."/>
            <person name="Tartera C."/>
            <person name="White D.G."/>
            <person name="Leclerc J.E."/>
            <person name="Ravel J."/>
            <person name="Cebula T.A."/>
        </authorList>
    </citation>
    <scope>NUCLEOTIDE SEQUENCE [LARGE SCALE GENOMIC DNA]</scope>
    <source>
        <strain>SL254</strain>
    </source>
</reference>
<keyword id="KW-0054">Arabinose catabolism</keyword>
<keyword id="KW-0119">Carbohydrate metabolism</keyword>
<keyword id="KW-0413">Isomerase</keyword>
<keyword id="KW-0464">Manganese</keyword>
<keyword id="KW-0479">Metal-binding</keyword>
<evidence type="ECO:0000255" key="1">
    <source>
        <dbReference type="HAMAP-Rule" id="MF_00519"/>
    </source>
</evidence>
<dbReference type="EC" id="5.3.1.4" evidence="1"/>
<dbReference type="EMBL" id="CP001113">
    <property type="protein sequence ID" value="ACF65413.1"/>
    <property type="molecule type" value="Genomic_DNA"/>
</dbReference>
<dbReference type="RefSeq" id="WP_000151691.1">
    <property type="nucleotide sequence ID" value="NZ_CCMR01000003.1"/>
</dbReference>
<dbReference type="SMR" id="B4SU23"/>
<dbReference type="KEGG" id="see:SNSL254_A0109"/>
<dbReference type="HOGENOM" id="CLU_045663_0_0_6"/>
<dbReference type="UniPathway" id="UPA00145">
    <property type="reaction ID" value="UER00565"/>
</dbReference>
<dbReference type="Proteomes" id="UP000008824">
    <property type="component" value="Chromosome"/>
</dbReference>
<dbReference type="GO" id="GO:0005829">
    <property type="term" value="C:cytosol"/>
    <property type="evidence" value="ECO:0007669"/>
    <property type="project" value="TreeGrafter"/>
</dbReference>
<dbReference type="GO" id="GO:0008733">
    <property type="term" value="F:L-arabinose isomerase activity"/>
    <property type="evidence" value="ECO:0007669"/>
    <property type="project" value="UniProtKB-UniRule"/>
</dbReference>
<dbReference type="GO" id="GO:0030145">
    <property type="term" value="F:manganese ion binding"/>
    <property type="evidence" value="ECO:0007669"/>
    <property type="project" value="UniProtKB-UniRule"/>
</dbReference>
<dbReference type="GO" id="GO:0019569">
    <property type="term" value="P:L-arabinose catabolic process to xylulose 5-phosphate"/>
    <property type="evidence" value="ECO:0007669"/>
    <property type="project" value="UniProtKB-UniRule"/>
</dbReference>
<dbReference type="CDD" id="cd03557">
    <property type="entry name" value="L-arabinose_isomerase"/>
    <property type="match status" value="1"/>
</dbReference>
<dbReference type="FunFam" id="3.40.50.10940:FF:000001">
    <property type="entry name" value="L-arabinose isomerase"/>
    <property type="match status" value="1"/>
</dbReference>
<dbReference type="Gene3D" id="3.40.50.10940">
    <property type="match status" value="1"/>
</dbReference>
<dbReference type="HAMAP" id="MF_00519">
    <property type="entry name" value="Arabinose_Isome"/>
    <property type="match status" value="1"/>
</dbReference>
<dbReference type="InterPro" id="IPR024664">
    <property type="entry name" value="Ara_Isoase_C"/>
</dbReference>
<dbReference type="InterPro" id="IPR055390">
    <property type="entry name" value="AraA_central"/>
</dbReference>
<dbReference type="InterPro" id="IPR055389">
    <property type="entry name" value="AraA_N"/>
</dbReference>
<dbReference type="InterPro" id="IPR038583">
    <property type="entry name" value="AraA_N_sf"/>
</dbReference>
<dbReference type="InterPro" id="IPR004216">
    <property type="entry name" value="Fuc/Ara_isomerase_C"/>
</dbReference>
<dbReference type="InterPro" id="IPR009015">
    <property type="entry name" value="Fucose_isomerase_N/cen_sf"/>
</dbReference>
<dbReference type="InterPro" id="IPR003762">
    <property type="entry name" value="Lara_isomerase"/>
</dbReference>
<dbReference type="NCBIfam" id="NF002795">
    <property type="entry name" value="PRK02929.1"/>
    <property type="match status" value="1"/>
</dbReference>
<dbReference type="PANTHER" id="PTHR38464">
    <property type="entry name" value="L-ARABINOSE ISOMERASE"/>
    <property type="match status" value="1"/>
</dbReference>
<dbReference type="PANTHER" id="PTHR38464:SF1">
    <property type="entry name" value="L-ARABINOSE ISOMERASE"/>
    <property type="match status" value="1"/>
</dbReference>
<dbReference type="Pfam" id="PF24856">
    <property type="entry name" value="AraA_central"/>
    <property type="match status" value="1"/>
</dbReference>
<dbReference type="Pfam" id="PF02610">
    <property type="entry name" value="AraA_N"/>
    <property type="match status" value="1"/>
</dbReference>
<dbReference type="Pfam" id="PF11762">
    <property type="entry name" value="Arabinose_Iso_C"/>
    <property type="match status" value="1"/>
</dbReference>
<dbReference type="PIRSF" id="PIRSF001478">
    <property type="entry name" value="L-ara_isomerase"/>
    <property type="match status" value="1"/>
</dbReference>
<dbReference type="SUPFAM" id="SSF50443">
    <property type="entry name" value="FucI/AraA C-terminal domain-like"/>
    <property type="match status" value="1"/>
</dbReference>
<dbReference type="SUPFAM" id="SSF53743">
    <property type="entry name" value="FucI/AraA N-terminal and middle domains"/>
    <property type="match status" value="1"/>
</dbReference>
<sequence length="500" mass="55892">MTIFDNYEVWFVIGSQHLYGAETLRQVTQHAEHVVNALNTEAKLPCKLVLKPLGTSPDEITAICRDANYDDRCAGLVVWLHTFSPAKMWINGLSILNKPLLQFHTQFNAALPWDSIDMDFMNLNQTAHGGREFGFIGARMRQQHAVVTGHWQDKEAHTRIGAWMRQAVSKQDTRQLKVCRFGDNMREVAVTDGDKVAAQIKFGFSVNTWAVGDLVQVVNSIGDGDINALIDEYESSYTLTPATQIHGDKRQNVREAARIELGMKRFLEQGGFHAFTTTFEDLHGLKQLPGLAVQRLMQQGYGFAGEGDWKTAALLRIMKVMSTGLQGGTSFMEDYTYHFEKGNDLVLGSHMLEVCPSIAVEEKPILDVQHLGIGGKEDPARLIFNTQTGPAIVASLIDLGDRYRLLVNCIDTVKTPHSLPKLPVANALWKAQPDLPTASEAWILAGGAHHTVFSHALDLNDMRQFAEIHDIEIAVIDNDTHLPAFKDALRWNEVYYGFKR</sequence>
<comment type="function">
    <text evidence="1">Catalyzes the conversion of L-arabinose to L-ribulose.</text>
</comment>
<comment type="catalytic activity">
    <reaction evidence="1">
        <text>beta-L-arabinopyranose = L-ribulose</text>
        <dbReference type="Rhea" id="RHEA:14821"/>
        <dbReference type="ChEBI" id="CHEBI:16880"/>
        <dbReference type="ChEBI" id="CHEBI:40886"/>
        <dbReference type="EC" id="5.3.1.4"/>
    </reaction>
</comment>
<comment type="cofactor">
    <cofactor evidence="1">
        <name>Mn(2+)</name>
        <dbReference type="ChEBI" id="CHEBI:29035"/>
    </cofactor>
    <text evidence="1">Binds 1 Mn(2+) ion per subunit.</text>
</comment>
<comment type="pathway">
    <text evidence="1">Carbohydrate degradation; L-arabinose degradation via L-ribulose; D-xylulose 5-phosphate from L-arabinose (bacterial route): step 1/3.</text>
</comment>
<comment type="subunit">
    <text evidence="1">Homohexamer.</text>
</comment>
<comment type="similarity">
    <text evidence="1">Belongs to the arabinose isomerase family.</text>
</comment>
<name>ARAA_SALNS</name>
<protein>
    <recommendedName>
        <fullName evidence="1">L-arabinose isomerase</fullName>
        <ecNumber evidence="1">5.3.1.4</ecNumber>
    </recommendedName>
</protein>
<feature type="chain" id="PRO_1000127617" description="L-arabinose isomerase">
    <location>
        <begin position="1"/>
        <end position="500"/>
    </location>
</feature>
<feature type="binding site" evidence="1">
    <location>
        <position position="306"/>
    </location>
    <ligand>
        <name>Mn(2+)</name>
        <dbReference type="ChEBI" id="CHEBI:29035"/>
    </ligand>
</feature>
<feature type="binding site" evidence="1">
    <location>
        <position position="333"/>
    </location>
    <ligand>
        <name>Mn(2+)</name>
        <dbReference type="ChEBI" id="CHEBI:29035"/>
    </ligand>
</feature>
<feature type="binding site" evidence="1">
    <location>
        <position position="350"/>
    </location>
    <ligand>
        <name>Mn(2+)</name>
        <dbReference type="ChEBI" id="CHEBI:29035"/>
    </ligand>
</feature>
<feature type="binding site" evidence="1">
    <location>
        <position position="450"/>
    </location>
    <ligand>
        <name>Mn(2+)</name>
        <dbReference type="ChEBI" id="CHEBI:29035"/>
    </ligand>
</feature>
<organism>
    <name type="scientific">Salmonella newport (strain SL254)</name>
    <dbReference type="NCBI Taxonomy" id="423368"/>
    <lineage>
        <taxon>Bacteria</taxon>
        <taxon>Pseudomonadati</taxon>
        <taxon>Pseudomonadota</taxon>
        <taxon>Gammaproteobacteria</taxon>
        <taxon>Enterobacterales</taxon>
        <taxon>Enterobacteriaceae</taxon>
        <taxon>Salmonella</taxon>
    </lineage>
</organism>
<gene>
    <name evidence="1" type="primary">araA</name>
    <name type="ordered locus">SNSL254_A0109</name>
</gene>